<accession>Q0P3N4</accession>
<comment type="function">
    <text evidence="1">One of the components of the core complex of photosystem II (PSII), required for its stability and/or assembly. PSII is a light-driven water:plastoquinone oxidoreductase that uses light energy to abstract electrons from H(2)O, generating O(2) and a proton gradient subsequently used for ATP formation. It consists of a core antenna complex that captures photons, and an electron transfer chain that converts photonic excitation into a charge separation.</text>
</comment>
<comment type="subunit">
    <text evidence="1">PSII is composed of 1 copy each of membrane proteins PsbA, PsbB, PsbC, PsbD, PsbE, PsbF, PsbH, PsbI, PsbJ, PsbK, PsbL, PsbM, PsbT, PsbX, PsbY, PsbZ, Psb30/Ycf12, at least 3 peripheral proteins of the oxygen-evolving complex and a large number of cofactors. It forms dimeric complexes.</text>
</comment>
<comment type="subcellular location">
    <subcellularLocation>
        <location evidence="1">Plastid</location>
        <location evidence="1">Chloroplast thylakoid membrane</location>
        <topology evidence="1">Single-pass membrane protein</topology>
    </subcellularLocation>
</comment>
<comment type="similarity">
    <text evidence="1">Belongs to the PsbH family.</text>
</comment>
<proteinExistence type="inferred from homology"/>
<geneLocation type="chloroplast"/>
<keyword id="KW-0150">Chloroplast</keyword>
<keyword id="KW-0472">Membrane</keyword>
<keyword id="KW-0602">Photosynthesis</keyword>
<keyword id="KW-0604">Photosystem II</keyword>
<keyword id="KW-0934">Plastid</keyword>
<keyword id="KW-1185">Reference proteome</keyword>
<keyword id="KW-0793">Thylakoid</keyword>
<keyword id="KW-0812">Transmembrane</keyword>
<keyword id="KW-1133">Transmembrane helix</keyword>
<name>PSBH_OSTTA</name>
<evidence type="ECO:0000255" key="1">
    <source>
        <dbReference type="HAMAP-Rule" id="MF_00752"/>
    </source>
</evidence>
<gene>
    <name evidence="1" type="primary">psbH</name>
    <name type="ordered locus">OtCpg00180</name>
</gene>
<sequence>MAAKDSKLAGTGKVTALGTALRPLNSEYGKVAPGWGTTILMSVFIGLFAVFIVILLEIYNKSLILDNVGVNWLSSTGL</sequence>
<feature type="chain" id="PRO_0000275765" description="Photosystem II reaction center protein H">
    <location>
        <begin position="1"/>
        <end position="78"/>
    </location>
</feature>
<feature type="transmembrane region" description="Helical" evidence="1">
    <location>
        <begin position="39"/>
        <end position="59"/>
    </location>
</feature>
<organism>
    <name type="scientific">Ostreococcus tauri</name>
    <dbReference type="NCBI Taxonomy" id="70448"/>
    <lineage>
        <taxon>Eukaryota</taxon>
        <taxon>Viridiplantae</taxon>
        <taxon>Chlorophyta</taxon>
        <taxon>Mamiellophyceae</taxon>
        <taxon>Mamiellales</taxon>
        <taxon>Bathycoccaceae</taxon>
        <taxon>Ostreococcus</taxon>
    </lineage>
</organism>
<reference key="1">
    <citation type="journal article" date="2007" name="Mol. Biol. Evol.">
        <title>The complete chloroplast and mitochondrial DNA sequence of Ostreococcus tauri: organelle genomes of the smallest eukaryote are examples of compaction.</title>
        <authorList>
            <person name="Robbens S."/>
            <person name="Derelle E."/>
            <person name="Ferraz C."/>
            <person name="Wuyts J."/>
            <person name="Moreau H."/>
            <person name="Van de Peer Y."/>
        </authorList>
    </citation>
    <scope>NUCLEOTIDE SEQUENCE [LARGE SCALE GENOMIC DNA]</scope>
    <source>
        <strain>OTTH0595</strain>
    </source>
</reference>
<dbReference type="EMBL" id="CR954199">
    <property type="protein sequence ID" value="CAL36343.1"/>
    <property type="molecule type" value="Genomic_DNA"/>
</dbReference>
<dbReference type="RefSeq" id="YP_717221.1">
    <property type="nucleotide sequence ID" value="NC_008289.1"/>
</dbReference>
<dbReference type="SMR" id="Q0P3N4"/>
<dbReference type="FunCoup" id="Q0P3N4">
    <property type="interactions" value="225"/>
</dbReference>
<dbReference type="STRING" id="70448.Q0P3N4"/>
<dbReference type="GeneID" id="4238886"/>
<dbReference type="KEGG" id="ota:OstapCp18"/>
<dbReference type="eggNOG" id="ENOG502S8Y7">
    <property type="taxonomic scope" value="Eukaryota"/>
</dbReference>
<dbReference type="InParanoid" id="Q0P3N4"/>
<dbReference type="Proteomes" id="UP000009170">
    <property type="component" value="Chloroplast"/>
</dbReference>
<dbReference type="GO" id="GO:0009535">
    <property type="term" value="C:chloroplast thylakoid membrane"/>
    <property type="evidence" value="ECO:0007669"/>
    <property type="project" value="UniProtKB-SubCell"/>
</dbReference>
<dbReference type="GO" id="GO:0009523">
    <property type="term" value="C:photosystem II"/>
    <property type="evidence" value="ECO:0007669"/>
    <property type="project" value="UniProtKB-KW"/>
</dbReference>
<dbReference type="GO" id="GO:0042301">
    <property type="term" value="F:phosphate ion binding"/>
    <property type="evidence" value="ECO:0007669"/>
    <property type="project" value="InterPro"/>
</dbReference>
<dbReference type="GO" id="GO:0015979">
    <property type="term" value="P:photosynthesis"/>
    <property type="evidence" value="ECO:0007669"/>
    <property type="project" value="UniProtKB-UniRule"/>
</dbReference>
<dbReference type="GO" id="GO:0050821">
    <property type="term" value="P:protein stabilization"/>
    <property type="evidence" value="ECO:0007669"/>
    <property type="project" value="InterPro"/>
</dbReference>
<dbReference type="Gene3D" id="1.20.5.880">
    <property type="entry name" value="Photosystem II reaction center protein H"/>
    <property type="match status" value="1"/>
</dbReference>
<dbReference type="HAMAP" id="MF_00752">
    <property type="entry name" value="PSII_PsbH"/>
    <property type="match status" value="1"/>
</dbReference>
<dbReference type="InterPro" id="IPR001056">
    <property type="entry name" value="PSII_PsbH"/>
</dbReference>
<dbReference type="InterPro" id="IPR036863">
    <property type="entry name" value="PSII_PsbH_sf"/>
</dbReference>
<dbReference type="NCBIfam" id="NF002728">
    <property type="entry name" value="PRK02624.1"/>
    <property type="match status" value="1"/>
</dbReference>
<dbReference type="PANTHER" id="PTHR34469">
    <property type="entry name" value="PHOTOSYSTEM II REACTION CENTER PROTEIN H"/>
    <property type="match status" value="1"/>
</dbReference>
<dbReference type="PANTHER" id="PTHR34469:SF4">
    <property type="entry name" value="PHOTOSYSTEM II REACTION CENTER PROTEIN H"/>
    <property type="match status" value="1"/>
</dbReference>
<dbReference type="Pfam" id="PF00737">
    <property type="entry name" value="PsbH"/>
    <property type="match status" value="1"/>
</dbReference>
<dbReference type="SUPFAM" id="SSF161025">
    <property type="entry name" value="Photosystem II 10 kDa phosphoprotein PsbH"/>
    <property type="match status" value="1"/>
</dbReference>
<protein>
    <recommendedName>
        <fullName evidence="1">Photosystem II reaction center protein H</fullName>
        <shortName evidence="1">PSII-H</shortName>
    </recommendedName>
</protein>